<dbReference type="EMBL" id="AY789053">
    <property type="protein sequence ID" value="AAV54128.2"/>
    <property type="molecule type" value="Genomic_DNA"/>
</dbReference>
<dbReference type="EMBL" id="DQ138079">
    <property type="protein sequence ID" value="AAZ66746.1"/>
    <property type="molecule type" value="Genomic_DNA"/>
</dbReference>
<dbReference type="EMBL" id="AY789052">
    <property type="protein sequence ID" value="AAV54127.2"/>
    <property type="molecule type" value="Genomic_DNA"/>
</dbReference>
<dbReference type="SMR" id="Q5S1V3"/>
<dbReference type="GO" id="GO:0005743">
    <property type="term" value="C:mitochondrial inner membrane"/>
    <property type="evidence" value="ECO:0007669"/>
    <property type="project" value="UniProtKB-SubCell"/>
</dbReference>
<dbReference type="GO" id="GO:0045275">
    <property type="term" value="C:respiratory chain complex III"/>
    <property type="evidence" value="ECO:0007669"/>
    <property type="project" value="InterPro"/>
</dbReference>
<dbReference type="GO" id="GO:0046872">
    <property type="term" value="F:metal ion binding"/>
    <property type="evidence" value="ECO:0007669"/>
    <property type="project" value="UniProtKB-KW"/>
</dbReference>
<dbReference type="GO" id="GO:0008121">
    <property type="term" value="F:ubiquinol-cytochrome-c reductase activity"/>
    <property type="evidence" value="ECO:0007669"/>
    <property type="project" value="InterPro"/>
</dbReference>
<dbReference type="GO" id="GO:0006122">
    <property type="term" value="P:mitochondrial electron transport, ubiquinol to cytochrome c"/>
    <property type="evidence" value="ECO:0007669"/>
    <property type="project" value="TreeGrafter"/>
</dbReference>
<dbReference type="CDD" id="cd00290">
    <property type="entry name" value="cytochrome_b_C"/>
    <property type="match status" value="1"/>
</dbReference>
<dbReference type="CDD" id="cd00284">
    <property type="entry name" value="Cytochrome_b_N"/>
    <property type="match status" value="1"/>
</dbReference>
<dbReference type="FunFam" id="1.20.810.10:FF:000002">
    <property type="entry name" value="Cytochrome b"/>
    <property type="match status" value="1"/>
</dbReference>
<dbReference type="Gene3D" id="1.20.810.10">
    <property type="entry name" value="Cytochrome Bc1 Complex, Chain C"/>
    <property type="match status" value="1"/>
</dbReference>
<dbReference type="InterPro" id="IPR005798">
    <property type="entry name" value="Cyt_b/b6_C"/>
</dbReference>
<dbReference type="InterPro" id="IPR036150">
    <property type="entry name" value="Cyt_b/b6_C_sf"/>
</dbReference>
<dbReference type="InterPro" id="IPR005797">
    <property type="entry name" value="Cyt_b/b6_N"/>
</dbReference>
<dbReference type="InterPro" id="IPR027387">
    <property type="entry name" value="Cytb/b6-like_sf"/>
</dbReference>
<dbReference type="InterPro" id="IPR030689">
    <property type="entry name" value="Cytochrome_b"/>
</dbReference>
<dbReference type="InterPro" id="IPR048260">
    <property type="entry name" value="Cytochrome_b_C_euk/bac"/>
</dbReference>
<dbReference type="InterPro" id="IPR048259">
    <property type="entry name" value="Cytochrome_b_N_euk/bac"/>
</dbReference>
<dbReference type="InterPro" id="IPR016174">
    <property type="entry name" value="Di-haem_cyt_TM"/>
</dbReference>
<dbReference type="PANTHER" id="PTHR19271">
    <property type="entry name" value="CYTOCHROME B"/>
    <property type="match status" value="1"/>
</dbReference>
<dbReference type="PANTHER" id="PTHR19271:SF16">
    <property type="entry name" value="CYTOCHROME B"/>
    <property type="match status" value="1"/>
</dbReference>
<dbReference type="Pfam" id="PF00032">
    <property type="entry name" value="Cytochrom_B_C"/>
    <property type="match status" value="1"/>
</dbReference>
<dbReference type="Pfam" id="PF00033">
    <property type="entry name" value="Cytochrome_B"/>
    <property type="match status" value="1"/>
</dbReference>
<dbReference type="PIRSF" id="PIRSF038885">
    <property type="entry name" value="COB"/>
    <property type="match status" value="1"/>
</dbReference>
<dbReference type="SUPFAM" id="SSF81648">
    <property type="entry name" value="a domain/subunit of cytochrome bc1 complex (Ubiquinol-cytochrome c reductase)"/>
    <property type="match status" value="1"/>
</dbReference>
<dbReference type="SUPFAM" id="SSF81342">
    <property type="entry name" value="Transmembrane di-heme cytochromes"/>
    <property type="match status" value="1"/>
</dbReference>
<dbReference type="PROSITE" id="PS51003">
    <property type="entry name" value="CYTB_CTER"/>
    <property type="match status" value="1"/>
</dbReference>
<dbReference type="PROSITE" id="PS51002">
    <property type="entry name" value="CYTB_NTER"/>
    <property type="match status" value="1"/>
</dbReference>
<reference key="1">
    <citation type="journal article" date="2006" name="Dokl. Biol. Sci.">
        <title>Molecular genetic study of marbled polecat (Vormela peregusna, Carnivora: Mustelidae).</title>
        <authorList>
            <person name="Rozhnov V.V."/>
            <person name="Meschersky I.G."/>
            <person name="Kholodova M.V."/>
        </authorList>
    </citation>
    <scope>NUCLEOTIDE SEQUENCE [GENOMIC DNA]</scope>
</reference>
<feature type="chain" id="PRO_0000254771" description="Cytochrome b">
    <location>
        <begin position="1"/>
        <end position="379"/>
    </location>
</feature>
<feature type="transmembrane region" description="Helical" evidence="2">
    <location>
        <begin position="33"/>
        <end position="53"/>
    </location>
</feature>
<feature type="transmembrane region" description="Helical" evidence="2">
    <location>
        <begin position="77"/>
        <end position="98"/>
    </location>
</feature>
<feature type="transmembrane region" description="Helical" evidence="2">
    <location>
        <begin position="113"/>
        <end position="133"/>
    </location>
</feature>
<feature type="transmembrane region" description="Helical" evidence="2">
    <location>
        <begin position="178"/>
        <end position="198"/>
    </location>
</feature>
<feature type="transmembrane region" description="Helical" evidence="2">
    <location>
        <begin position="226"/>
        <end position="246"/>
    </location>
</feature>
<feature type="transmembrane region" description="Helical" evidence="2">
    <location>
        <begin position="288"/>
        <end position="308"/>
    </location>
</feature>
<feature type="transmembrane region" description="Helical" evidence="2">
    <location>
        <begin position="320"/>
        <end position="340"/>
    </location>
</feature>
<feature type="transmembrane region" description="Helical" evidence="2">
    <location>
        <begin position="347"/>
        <end position="367"/>
    </location>
</feature>
<feature type="binding site" description="axial binding residue" evidence="2">
    <location>
        <position position="83"/>
    </location>
    <ligand>
        <name>heme b</name>
        <dbReference type="ChEBI" id="CHEBI:60344"/>
        <label>b562</label>
    </ligand>
    <ligandPart>
        <name>Fe</name>
        <dbReference type="ChEBI" id="CHEBI:18248"/>
    </ligandPart>
</feature>
<feature type="binding site" description="axial binding residue" evidence="2">
    <location>
        <position position="97"/>
    </location>
    <ligand>
        <name>heme b</name>
        <dbReference type="ChEBI" id="CHEBI:60344"/>
        <label>b566</label>
    </ligand>
    <ligandPart>
        <name>Fe</name>
        <dbReference type="ChEBI" id="CHEBI:18248"/>
    </ligandPart>
</feature>
<feature type="binding site" description="axial binding residue" evidence="2">
    <location>
        <position position="182"/>
    </location>
    <ligand>
        <name>heme b</name>
        <dbReference type="ChEBI" id="CHEBI:60344"/>
        <label>b562</label>
    </ligand>
    <ligandPart>
        <name>Fe</name>
        <dbReference type="ChEBI" id="CHEBI:18248"/>
    </ligandPart>
</feature>
<feature type="binding site" description="axial binding residue" evidence="2">
    <location>
        <position position="196"/>
    </location>
    <ligand>
        <name>heme b</name>
        <dbReference type="ChEBI" id="CHEBI:60344"/>
        <label>b566</label>
    </ligand>
    <ligandPart>
        <name>Fe</name>
        <dbReference type="ChEBI" id="CHEBI:18248"/>
    </ligandPart>
</feature>
<feature type="binding site" evidence="2">
    <location>
        <position position="201"/>
    </location>
    <ligand>
        <name>a ubiquinone</name>
        <dbReference type="ChEBI" id="CHEBI:16389"/>
    </ligand>
</feature>
<protein>
    <recommendedName>
        <fullName>Cytochrome b</fullName>
    </recommendedName>
    <alternativeName>
        <fullName>Complex III subunit 3</fullName>
    </alternativeName>
    <alternativeName>
        <fullName>Complex III subunit III</fullName>
    </alternativeName>
    <alternativeName>
        <fullName>Cytochrome b-c1 complex subunit 3</fullName>
    </alternativeName>
    <alternativeName>
        <fullName>Ubiquinol-cytochrome-c reductase complex cytochrome b subunit</fullName>
    </alternativeName>
</protein>
<accession>Q5S1V3</accession>
<proteinExistence type="inferred from homology"/>
<organism>
    <name type="scientific">Vormela peregusna</name>
    <name type="common">Marbled polecat</name>
    <dbReference type="NCBI Taxonomy" id="300627"/>
    <lineage>
        <taxon>Eukaryota</taxon>
        <taxon>Metazoa</taxon>
        <taxon>Chordata</taxon>
        <taxon>Craniata</taxon>
        <taxon>Vertebrata</taxon>
        <taxon>Euteleostomi</taxon>
        <taxon>Mammalia</taxon>
        <taxon>Eutheria</taxon>
        <taxon>Laurasiatheria</taxon>
        <taxon>Carnivora</taxon>
        <taxon>Caniformia</taxon>
        <taxon>Musteloidea</taxon>
        <taxon>Mustelidae</taxon>
        <taxon>Galictinae</taxon>
        <taxon>Vormela</taxon>
    </lineage>
</organism>
<geneLocation type="mitochondrion"/>
<name>CYB_VORPE</name>
<keyword id="KW-0249">Electron transport</keyword>
<keyword id="KW-0349">Heme</keyword>
<keyword id="KW-0408">Iron</keyword>
<keyword id="KW-0472">Membrane</keyword>
<keyword id="KW-0479">Metal-binding</keyword>
<keyword id="KW-0496">Mitochondrion</keyword>
<keyword id="KW-0999">Mitochondrion inner membrane</keyword>
<keyword id="KW-0679">Respiratory chain</keyword>
<keyword id="KW-0812">Transmembrane</keyword>
<keyword id="KW-1133">Transmembrane helix</keyword>
<keyword id="KW-0813">Transport</keyword>
<keyword id="KW-0830">Ubiquinone</keyword>
<comment type="function">
    <text evidence="2">Component of the ubiquinol-cytochrome c reductase complex (complex III or cytochrome b-c1 complex) that is part of the mitochondrial respiratory chain. The b-c1 complex mediates electron transfer from ubiquinol to cytochrome c. Contributes to the generation of a proton gradient across the mitochondrial membrane that is then used for ATP synthesis.</text>
</comment>
<comment type="cofactor">
    <cofactor evidence="2">
        <name>heme b</name>
        <dbReference type="ChEBI" id="CHEBI:60344"/>
    </cofactor>
    <text evidence="2">Binds 2 heme b groups non-covalently.</text>
</comment>
<comment type="subunit">
    <text evidence="2">The cytochrome bc1 complex contains 11 subunits: 3 respiratory subunits (MT-CYB, CYC1 and UQCRFS1), 2 core proteins (UQCRC1 and UQCRC2) and 6 low-molecular weight proteins (UQCRH/QCR6, UQCRB/QCR7, UQCRQ/QCR8, UQCR10/QCR9, UQCR11/QCR10 and a cleavage product of UQCRFS1). This cytochrome bc1 complex then forms a dimer.</text>
</comment>
<comment type="subcellular location">
    <subcellularLocation>
        <location evidence="2">Mitochondrion inner membrane</location>
        <topology evidence="2">Multi-pass membrane protein</topology>
    </subcellularLocation>
</comment>
<comment type="miscellaneous">
    <text evidence="1">Heme 1 (or BL or b562) is low-potential and absorbs at about 562 nm, and heme 2 (or BH or b566) is high-potential and absorbs at about 566 nm.</text>
</comment>
<comment type="similarity">
    <text evidence="3 4">Belongs to the cytochrome b family.</text>
</comment>
<comment type="caution">
    <text evidence="2">The full-length protein contains only eight transmembrane helices, not nine as predicted by bioinformatics tools.</text>
</comment>
<evidence type="ECO:0000250" key="1"/>
<evidence type="ECO:0000250" key="2">
    <source>
        <dbReference type="UniProtKB" id="P00157"/>
    </source>
</evidence>
<evidence type="ECO:0000255" key="3">
    <source>
        <dbReference type="PROSITE-ProRule" id="PRU00967"/>
    </source>
</evidence>
<evidence type="ECO:0000255" key="4">
    <source>
        <dbReference type="PROSITE-ProRule" id="PRU00968"/>
    </source>
</evidence>
<gene>
    <name type="primary">MT-CYB</name>
    <name type="synonym">COB</name>
    <name type="synonym">CYTB</name>
    <name type="synonym">MTCYB</name>
</gene>
<sequence length="379" mass="42737">MTNIRKTHPLTKIINNSFIDLPAPSNISAWWNFGSLLGICLILQILTGLFLAMHYTSDTTTAFSSVTHICRDVNYGWIIRYTHANGASMFFICLFLHVGRGLYYGSYMFPETWNIGIILLFTVMATAFMGYVLPWGQMSFWGATVITNLLSAIPYIGTSLVEWIWGGFSVDKATLTRFFAFHFILPFIILALAAIHLLFLHETGSNNPSGIPSNSDKIPFHPYYTIKDILGALFLIITLMTLVLFSPDLLGDPDNYIPANPLNTPPHIKPEWYFLFAYAILRSIPNKLGGVLALILSILVLAIIPLLHTSKQRSMMFRPLSQCLFWLLVADLLTLTWIGGQPVEYPFIIIGQLASILYFMILLIFMPIISIAENNLLKW</sequence>